<dbReference type="EMBL" id="AB028616">
    <property type="protein sequence ID" value="BAB01132.1"/>
    <property type="molecule type" value="Genomic_DNA"/>
</dbReference>
<dbReference type="EMBL" id="CP002686">
    <property type="protein sequence ID" value="AEE77403.1"/>
    <property type="molecule type" value="Genomic_DNA"/>
</dbReference>
<dbReference type="EMBL" id="BT029535">
    <property type="protein sequence ID" value="ABL66791.1"/>
    <property type="molecule type" value="mRNA"/>
</dbReference>
<dbReference type="SMR" id="Q9LRS5"/>
<dbReference type="BioGRID" id="7763">
    <property type="interactions" value="1"/>
</dbReference>
<dbReference type="IntAct" id="Q9LRS5">
    <property type="interactions" value="1"/>
</dbReference>
<dbReference type="STRING" id="3702.Q9LRS5"/>
<dbReference type="PaxDb" id="3702-AT3G28100.1"/>
<dbReference type="ProteomicsDB" id="242663"/>
<dbReference type="EnsemblPlants" id="AT3G28100.1">
    <property type="protein sequence ID" value="AT3G28100.1"/>
    <property type="gene ID" value="AT3G28100"/>
</dbReference>
<dbReference type="Gramene" id="AT3G28100.1">
    <property type="protein sequence ID" value="AT3G28100.1"/>
    <property type="gene ID" value="AT3G28100"/>
</dbReference>
<dbReference type="KEGG" id="ath:AT3G28100"/>
<dbReference type="Araport" id="AT3G28100"/>
<dbReference type="TAIR" id="AT3G28100">
    <property type="gene designation" value="UMAMIT45"/>
</dbReference>
<dbReference type="eggNOG" id="ENOG502QRQK">
    <property type="taxonomic scope" value="Eukaryota"/>
</dbReference>
<dbReference type="HOGENOM" id="CLU_025359_0_1_1"/>
<dbReference type="InParanoid" id="Q9LRS5"/>
<dbReference type="OMA" id="YHGPSVF"/>
<dbReference type="PhylomeDB" id="Q9LRS5"/>
<dbReference type="PRO" id="PR:Q9LRS5"/>
<dbReference type="Proteomes" id="UP000006548">
    <property type="component" value="Chromosome 3"/>
</dbReference>
<dbReference type="ExpressionAtlas" id="Q9LRS5">
    <property type="expression patterns" value="baseline and differential"/>
</dbReference>
<dbReference type="GO" id="GO:0016020">
    <property type="term" value="C:membrane"/>
    <property type="evidence" value="ECO:0007669"/>
    <property type="project" value="UniProtKB-SubCell"/>
</dbReference>
<dbReference type="GO" id="GO:0022857">
    <property type="term" value="F:transmembrane transporter activity"/>
    <property type="evidence" value="ECO:0007669"/>
    <property type="project" value="InterPro"/>
</dbReference>
<dbReference type="InterPro" id="IPR000620">
    <property type="entry name" value="EamA_dom"/>
</dbReference>
<dbReference type="InterPro" id="IPR030184">
    <property type="entry name" value="WAT1-related"/>
</dbReference>
<dbReference type="PANTHER" id="PTHR31218">
    <property type="entry name" value="WAT1-RELATED PROTEIN"/>
    <property type="match status" value="1"/>
</dbReference>
<dbReference type="Pfam" id="PF00892">
    <property type="entry name" value="EamA"/>
    <property type="match status" value="1"/>
</dbReference>
<dbReference type="SUPFAM" id="SSF103481">
    <property type="entry name" value="Multidrug resistance efflux transporter EmrE"/>
    <property type="match status" value="2"/>
</dbReference>
<proteinExistence type="evidence at transcript level"/>
<gene>
    <name type="ordered locus">At3g28100</name>
    <name type="ORF">MMG15.14</name>
</gene>
<comment type="subcellular location">
    <subcellularLocation>
        <location evidence="1">Membrane</location>
        <topology evidence="3">Multi-pass membrane protein</topology>
    </subcellularLocation>
</comment>
<comment type="similarity">
    <text evidence="3">Belongs to the drug/metabolite transporter (DMT) superfamily. Plant drug/metabolite exporter (P-DME) (TC 2.A.7.4) family.</text>
</comment>
<organism>
    <name type="scientific">Arabidopsis thaliana</name>
    <name type="common">Mouse-ear cress</name>
    <dbReference type="NCBI Taxonomy" id="3702"/>
    <lineage>
        <taxon>Eukaryota</taxon>
        <taxon>Viridiplantae</taxon>
        <taxon>Streptophyta</taxon>
        <taxon>Embryophyta</taxon>
        <taxon>Tracheophyta</taxon>
        <taxon>Spermatophyta</taxon>
        <taxon>Magnoliopsida</taxon>
        <taxon>eudicotyledons</taxon>
        <taxon>Gunneridae</taxon>
        <taxon>Pentapetalae</taxon>
        <taxon>rosids</taxon>
        <taxon>malvids</taxon>
        <taxon>Brassicales</taxon>
        <taxon>Brassicaceae</taxon>
        <taxon>Camelineae</taxon>
        <taxon>Arabidopsis</taxon>
    </lineage>
</organism>
<keyword id="KW-0472">Membrane</keyword>
<keyword id="KW-1185">Reference proteome</keyword>
<keyword id="KW-0812">Transmembrane</keyword>
<keyword id="KW-1133">Transmembrane helix</keyword>
<protein>
    <recommendedName>
        <fullName>WAT1-related protein At3g28100</fullName>
    </recommendedName>
</protein>
<feature type="chain" id="PRO_0000421330" description="WAT1-related protein At3g28100">
    <location>
        <begin position="1"/>
        <end position="353"/>
    </location>
</feature>
<feature type="transmembrane region" description="Helical" evidence="2">
    <location>
        <begin position="12"/>
        <end position="32"/>
    </location>
</feature>
<feature type="transmembrane region" description="Helical" evidence="2">
    <location>
        <begin position="43"/>
        <end position="63"/>
    </location>
</feature>
<feature type="transmembrane region" description="Helical" evidence="2">
    <location>
        <begin position="81"/>
        <end position="101"/>
    </location>
</feature>
<feature type="transmembrane region" description="Helical" evidence="2">
    <location>
        <begin position="105"/>
        <end position="125"/>
    </location>
</feature>
<feature type="transmembrane region" description="Helical" evidence="2">
    <location>
        <begin position="137"/>
        <end position="157"/>
    </location>
</feature>
<feature type="transmembrane region" description="Helical" evidence="2">
    <location>
        <begin position="187"/>
        <end position="207"/>
    </location>
</feature>
<feature type="transmembrane region" description="Helical" evidence="2">
    <location>
        <begin position="219"/>
        <end position="239"/>
    </location>
</feature>
<feature type="transmembrane region" description="Helical" evidence="2">
    <location>
        <begin position="252"/>
        <end position="272"/>
    </location>
</feature>
<feature type="transmembrane region" description="Helical" evidence="2">
    <location>
        <begin position="283"/>
        <end position="303"/>
    </location>
</feature>
<feature type="transmembrane region" description="Helical" evidence="2">
    <location>
        <begin position="308"/>
        <end position="328"/>
    </location>
</feature>
<feature type="domain" description="EamA">
    <location>
        <begin position="27"/>
        <end position="155"/>
    </location>
</feature>
<accession>Q9LRS5</accession>
<name>WTR22_ARATH</name>
<evidence type="ECO:0000250" key="1"/>
<evidence type="ECO:0000255" key="2"/>
<evidence type="ECO:0000305" key="3"/>
<sequence length="353" mass="38560">MARTVSLWRREAVFLTAMLATETGVVGISTLFKVATSKGLNLYAFLGYSYLLASLLLLPSLFFTDRSRSLPPLSLSILSKIGLLGLLGSMYVITGYIGIEYSSPTLASAISNITPALTFILAIIFRMEKVSFKERSSVAKVMGTILSLIGALVVVLYHGPRVFVASSPPYINFRQLSPPLSSSNSDWLIGGALLTIRDIFVSVSFILQAKIMSTYPAAFTVSFLYIVSVSIVTSMIGLVVEKNNPSVWIIRFDITLITIVTMAIITSVYYVIHSWTVRHKGPLYLAIFKPLSILIAVVMSAVFLNDSLYLGCLIGGLLITLGFYAVMWGKANEEKDQLLLVSGKERTPLLLNG</sequence>
<reference key="1">
    <citation type="journal article" date="2000" name="DNA Res.">
        <title>Structural analysis of Arabidopsis thaliana chromosome 3. II. Sequence features of the 4,251,695 bp regions covered by 90 P1, TAC and BAC clones.</title>
        <authorList>
            <person name="Kaneko T."/>
            <person name="Katoh T."/>
            <person name="Sato S."/>
            <person name="Nakamura Y."/>
            <person name="Asamizu E."/>
            <person name="Tabata S."/>
        </authorList>
    </citation>
    <scope>NUCLEOTIDE SEQUENCE [LARGE SCALE GENOMIC DNA]</scope>
    <source>
        <strain>cv. Columbia</strain>
    </source>
</reference>
<reference key="2">
    <citation type="journal article" date="2017" name="Plant J.">
        <title>Araport11: a complete reannotation of the Arabidopsis thaliana reference genome.</title>
        <authorList>
            <person name="Cheng C.Y."/>
            <person name="Krishnakumar V."/>
            <person name="Chan A.P."/>
            <person name="Thibaud-Nissen F."/>
            <person name="Schobel S."/>
            <person name="Town C.D."/>
        </authorList>
    </citation>
    <scope>GENOME REANNOTATION</scope>
    <source>
        <strain>cv. Columbia</strain>
    </source>
</reference>
<reference key="3">
    <citation type="submission" date="2006-12" db="EMBL/GenBank/DDBJ databases">
        <title>Arabidopsis ORF clones.</title>
        <authorList>
            <person name="Bautista V.R."/>
            <person name="Kim C.J."/>
            <person name="Chen H."/>
            <person name="Quinitio C."/>
            <person name="Ecker J.R."/>
        </authorList>
    </citation>
    <scope>NUCLEOTIDE SEQUENCE [LARGE SCALE MRNA]</scope>
    <source>
        <strain>cv. Columbia</strain>
    </source>
</reference>